<dbReference type="EC" id="7.6.2.5" evidence="1"/>
<dbReference type="EMBL" id="CP000449">
    <property type="protein sequence ID" value="ABI67141.1"/>
    <property type="molecule type" value="Genomic_DNA"/>
</dbReference>
<dbReference type="RefSeq" id="WP_011644785.1">
    <property type="nucleotide sequence ID" value="NC_008347.1"/>
</dbReference>
<dbReference type="SMR" id="Q0AKQ2"/>
<dbReference type="STRING" id="394221.Mmar10_2860"/>
<dbReference type="KEGG" id="mmr:Mmar10_2860"/>
<dbReference type="eggNOG" id="COG4133">
    <property type="taxonomic scope" value="Bacteria"/>
</dbReference>
<dbReference type="HOGENOM" id="CLU_000604_1_2_5"/>
<dbReference type="Proteomes" id="UP000001964">
    <property type="component" value="Chromosome"/>
</dbReference>
<dbReference type="GO" id="GO:0005886">
    <property type="term" value="C:plasma membrane"/>
    <property type="evidence" value="ECO:0007669"/>
    <property type="project" value="UniProtKB-SubCell"/>
</dbReference>
<dbReference type="GO" id="GO:0015439">
    <property type="term" value="F:ABC-type heme transporter activity"/>
    <property type="evidence" value="ECO:0007669"/>
    <property type="project" value="UniProtKB-EC"/>
</dbReference>
<dbReference type="GO" id="GO:0005524">
    <property type="term" value="F:ATP binding"/>
    <property type="evidence" value="ECO:0007669"/>
    <property type="project" value="UniProtKB-KW"/>
</dbReference>
<dbReference type="GO" id="GO:0016887">
    <property type="term" value="F:ATP hydrolysis activity"/>
    <property type="evidence" value="ECO:0007669"/>
    <property type="project" value="InterPro"/>
</dbReference>
<dbReference type="GO" id="GO:0017004">
    <property type="term" value="P:cytochrome complex assembly"/>
    <property type="evidence" value="ECO:0007669"/>
    <property type="project" value="UniProtKB-KW"/>
</dbReference>
<dbReference type="Gene3D" id="3.40.50.300">
    <property type="entry name" value="P-loop containing nucleotide triphosphate hydrolases"/>
    <property type="match status" value="1"/>
</dbReference>
<dbReference type="InterPro" id="IPR003593">
    <property type="entry name" value="AAA+_ATPase"/>
</dbReference>
<dbReference type="InterPro" id="IPR003439">
    <property type="entry name" value="ABC_transporter-like_ATP-bd"/>
</dbReference>
<dbReference type="InterPro" id="IPR005895">
    <property type="entry name" value="ABC_transptr_haem_export_CcmA"/>
</dbReference>
<dbReference type="InterPro" id="IPR027417">
    <property type="entry name" value="P-loop_NTPase"/>
</dbReference>
<dbReference type="NCBIfam" id="TIGR01189">
    <property type="entry name" value="ccmA"/>
    <property type="match status" value="1"/>
</dbReference>
<dbReference type="PANTHER" id="PTHR43499">
    <property type="entry name" value="ABC TRANSPORTER I FAMILY MEMBER 1"/>
    <property type="match status" value="1"/>
</dbReference>
<dbReference type="PANTHER" id="PTHR43499:SF1">
    <property type="entry name" value="ABC TRANSPORTER I FAMILY MEMBER 1"/>
    <property type="match status" value="1"/>
</dbReference>
<dbReference type="Pfam" id="PF00005">
    <property type="entry name" value="ABC_tran"/>
    <property type="match status" value="1"/>
</dbReference>
<dbReference type="SMART" id="SM00382">
    <property type="entry name" value="AAA"/>
    <property type="match status" value="1"/>
</dbReference>
<dbReference type="SUPFAM" id="SSF52540">
    <property type="entry name" value="P-loop containing nucleoside triphosphate hydrolases"/>
    <property type="match status" value="1"/>
</dbReference>
<dbReference type="PROSITE" id="PS50893">
    <property type="entry name" value="ABC_TRANSPORTER_2"/>
    <property type="match status" value="1"/>
</dbReference>
<dbReference type="PROSITE" id="PS51243">
    <property type="entry name" value="CCMA"/>
    <property type="match status" value="1"/>
</dbReference>
<protein>
    <recommendedName>
        <fullName evidence="1">Cytochrome c biogenesis ATP-binding export protein CcmA</fullName>
        <ecNumber evidence="1">7.6.2.5</ecNumber>
    </recommendedName>
    <alternativeName>
        <fullName evidence="1">Heme exporter protein A</fullName>
    </alternativeName>
</protein>
<accession>Q0AKQ2</accession>
<proteinExistence type="inferred from homology"/>
<keyword id="KW-0067">ATP-binding</keyword>
<keyword id="KW-0997">Cell inner membrane</keyword>
<keyword id="KW-1003">Cell membrane</keyword>
<keyword id="KW-0201">Cytochrome c-type biogenesis</keyword>
<keyword id="KW-0472">Membrane</keyword>
<keyword id="KW-0547">Nucleotide-binding</keyword>
<keyword id="KW-1185">Reference proteome</keyword>
<keyword id="KW-1278">Translocase</keyword>
<keyword id="KW-0813">Transport</keyword>
<feature type="chain" id="PRO_0000271932" description="Cytochrome c biogenesis ATP-binding export protein CcmA">
    <location>
        <begin position="1"/>
        <end position="214"/>
    </location>
</feature>
<feature type="domain" description="ABC transporter" evidence="1">
    <location>
        <begin position="16"/>
        <end position="212"/>
    </location>
</feature>
<feature type="binding site" evidence="1">
    <location>
        <begin position="48"/>
        <end position="55"/>
    </location>
    <ligand>
        <name>ATP</name>
        <dbReference type="ChEBI" id="CHEBI:30616"/>
    </ligand>
</feature>
<sequence length="214" mass="23221">MTEKFPDLPDLQPETLRVSGLSLSRGDITLVRDFSLDLAPGQAMLMSGPNGTGKTTLLRAVAGFVRPDAGRVVFGEGPKADSASELVAWLGHADGLKPVETPRQSLRFWAKMNDQGRDPILPLMRAMAIESLIDRPASRLSRGQQRRCALVRVALANRPIWLLDEPAGPLDGGGRARLAALVDWHRSRGGSVIAATHQSLDWPDAKRIDLGAHR</sequence>
<comment type="function">
    <text evidence="1">Part of the ABC transporter complex CcmAB involved in the biogenesis of c-type cytochromes; once thought to export heme, this seems not to be the case, but its exact role is uncertain. Responsible for energy coupling to the transport system.</text>
</comment>
<comment type="catalytic activity">
    <reaction evidence="1">
        <text>heme b(in) + ATP + H2O = heme b(out) + ADP + phosphate + H(+)</text>
        <dbReference type="Rhea" id="RHEA:19261"/>
        <dbReference type="ChEBI" id="CHEBI:15377"/>
        <dbReference type="ChEBI" id="CHEBI:15378"/>
        <dbReference type="ChEBI" id="CHEBI:30616"/>
        <dbReference type="ChEBI" id="CHEBI:43474"/>
        <dbReference type="ChEBI" id="CHEBI:60344"/>
        <dbReference type="ChEBI" id="CHEBI:456216"/>
        <dbReference type="EC" id="7.6.2.5"/>
    </reaction>
</comment>
<comment type="subunit">
    <text evidence="1">The complex is composed of two ATP-binding proteins (CcmA) and two transmembrane proteins (CcmB).</text>
</comment>
<comment type="subcellular location">
    <subcellularLocation>
        <location evidence="1">Cell inner membrane</location>
        <topology evidence="1">Peripheral membrane protein</topology>
    </subcellularLocation>
</comment>
<comment type="similarity">
    <text evidence="1">Belongs to the ABC transporter superfamily. CcmA exporter (TC 3.A.1.107) family.</text>
</comment>
<reference key="1">
    <citation type="submission" date="2006-08" db="EMBL/GenBank/DDBJ databases">
        <title>Complete sequence of Maricaulis maris MCS10.</title>
        <authorList>
            <consortium name="US DOE Joint Genome Institute"/>
            <person name="Copeland A."/>
            <person name="Lucas S."/>
            <person name="Lapidus A."/>
            <person name="Barry K."/>
            <person name="Detter J.C."/>
            <person name="Glavina del Rio T."/>
            <person name="Hammon N."/>
            <person name="Israni S."/>
            <person name="Dalin E."/>
            <person name="Tice H."/>
            <person name="Pitluck S."/>
            <person name="Saunders E."/>
            <person name="Brettin T."/>
            <person name="Bruce D."/>
            <person name="Han C."/>
            <person name="Tapia R."/>
            <person name="Gilna P."/>
            <person name="Schmutz J."/>
            <person name="Larimer F."/>
            <person name="Land M."/>
            <person name="Hauser L."/>
            <person name="Kyrpides N."/>
            <person name="Mikhailova N."/>
            <person name="Viollier P."/>
            <person name="Stephens C."/>
            <person name="Richardson P."/>
        </authorList>
    </citation>
    <scope>NUCLEOTIDE SEQUENCE [LARGE SCALE GENOMIC DNA]</scope>
    <source>
        <strain>MCS10</strain>
    </source>
</reference>
<gene>
    <name evidence="1" type="primary">ccmA</name>
    <name type="ordered locus">Mmar10_2860</name>
</gene>
<evidence type="ECO:0000255" key="1">
    <source>
        <dbReference type="HAMAP-Rule" id="MF_01707"/>
    </source>
</evidence>
<name>CCMA_MARMM</name>
<organism>
    <name type="scientific">Maricaulis maris (strain MCS10)</name>
    <name type="common">Caulobacter maris</name>
    <dbReference type="NCBI Taxonomy" id="394221"/>
    <lineage>
        <taxon>Bacteria</taxon>
        <taxon>Pseudomonadati</taxon>
        <taxon>Pseudomonadota</taxon>
        <taxon>Alphaproteobacteria</taxon>
        <taxon>Maricaulales</taxon>
        <taxon>Maricaulaceae</taxon>
        <taxon>Maricaulis</taxon>
    </lineage>
</organism>